<keyword id="KW-0963">Cytoplasm</keyword>
<keyword id="KW-0324">Glycolysis</keyword>
<keyword id="KW-0456">Lyase</keyword>
<keyword id="KW-0460">Magnesium</keyword>
<keyword id="KW-0479">Metal-binding</keyword>
<keyword id="KW-1185">Reference proteome</keyword>
<keyword id="KW-0964">Secreted</keyword>
<name>ENO_DICTD</name>
<sequence>MPAILDVHGREVLDSRGNPTVEAEVYLEDGSVGRAIVPSGASTGSREALELRDNDPKRYKGKGVLQAVKNINEIIAQELIGLEALNQYTVDKTMLELDGTENKSRLGANAILAVSLATARAAAASLGVPLYVYLGGVQARELPTPLMNVINGGKHADNPLDFQEYMIVPLASTFKESLRWAVEVFHTLRSILKSKGLNTNVGDEGGFAPYLEKNEDPLAILVEAIQKAGFEPGKDVALALDLAASEFYEDGKYILKAEGKELTSDEMISLLEYLCDKYPIVSIEDGLSEKDWDGWKKLTDKLGKRVQLVGDDIFVTNPQILAEGIEKGIANAILVKVNQIGSLTETLDTIRIAHQAGYRTVISHRSGETEDTFIADLAVAVNSGQIKTGSLSRTDRIAKYNQLLRIEEDLGEAALYRGILNFKR</sequence>
<organism>
    <name type="scientific">Dictyoglomus turgidum (strain DSM 6724 / Z-1310)</name>
    <dbReference type="NCBI Taxonomy" id="515635"/>
    <lineage>
        <taxon>Bacteria</taxon>
        <taxon>Pseudomonadati</taxon>
        <taxon>Dictyoglomota</taxon>
        <taxon>Dictyoglomia</taxon>
        <taxon>Dictyoglomales</taxon>
        <taxon>Dictyoglomaceae</taxon>
        <taxon>Dictyoglomus</taxon>
    </lineage>
</organism>
<dbReference type="EC" id="4.2.1.11" evidence="1"/>
<dbReference type="EMBL" id="CP001251">
    <property type="protein sequence ID" value="ACK42698.1"/>
    <property type="molecule type" value="Genomic_DNA"/>
</dbReference>
<dbReference type="RefSeq" id="WP_012583776.1">
    <property type="nucleotide sequence ID" value="NC_011661.1"/>
</dbReference>
<dbReference type="RefSeq" id="YP_002353312.1">
    <property type="nucleotide sequence ID" value="NC_011661.1"/>
</dbReference>
<dbReference type="SMR" id="B8E0W1"/>
<dbReference type="FunCoup" id="B8E0W1">
    <property type="interactions" value="282"/>
</dbReference>
<dbReference type="STRING" id="515635.Dtur_1424"/>
<dbReference type="EnsemblBacteria" id="ACK42698">
    <property type="protein sequence ID" value="ACK42698"/>
    <property type="gene ID" value="Dtur_1424"/>
</dbReference>
<dbReference type="KEGG" id="dtu:Dtur_1424"/>
<dbReference type="PATRIC" id="fig|515635.4.peg.1471"/>
<dbReference type="eggNOG" id="COG0148">
    <property type="taxonomic scope" value="Bacteria"/>
</dbReference>
<dbReference type="HOGENOM" id="CLU_031223_2_1_0"/>
<dbReference type="InParanoid" id="B8E0W1"/>
<dbReference type="OrthoDB" id="9804716at2"/>
<dbReference type="UniPathway" id="UPA00109">
    <property type="reaction ID" value="UER00187"/>
</dbReference>
<dbReference type="Proteomes" id="UP000007719">
    <property type="component" value="Chromosome"/>
</dbReference>
<dbReference type="GO" id="GO:0009986">
    <property type="term" value="C:cell surface"/>
    <property type="evidence" value="ECO:0007669"/>
    <property type="project" value="UniProtKB-SubCell"/>
</dbReference>
<dbReference type="GO" id="GO:0005576">
    <property type="term" value="C:extracellular region"/>
    <property type="evidence" value="ECO:0007669"/>
    <property type="project" value="UniProtKB-SubCell"/>
</dbReference>
<dbReference type="GO" id="GO:0000015">
    <property type="term" value="C:phosphopyruvate hydratase complex"/>
    <property type="evidence" value="ECO:0000318"/>
    <property type="project" value="GO_Central"/>
</dbReference>
<dbReference type="GO" id="GO:0000287">
    <property type="term" value="F:magnesium ion binding"/>
    <property type="evidence" value="ECO:0007669"/>
    <property type="project" value="UniProtKB-UniRule"/>
</dbReference>
<dbReference type="GO" id="GO:0004634">
    <property type="term" value="F:phosphopyruvate hydratase activity"/>
    <property type="evidence" value="ECO:0000318"/>
    <property type="project" value="GO_Central"/>
</dbReference>
<dbReference type="GO" id="GO:0006096">
    <property type="term" value="P:glycolytic process"/>
    <property type="evidence" value="ECO:0000318"/>
    <property type="project" value="GO_Central"/>
</dbReference>
<dbReference type="CDD" id="cd03313">
    <property type="entry name" value="enolase"/>
    <property type="match status" value="1"/>
</dbReference>
<dbReference type="FunFam" id="3.20.20.120:FF:000001">
    <property type="entry name" value="Enolase"/>
    <property type="match status" value="1"/>
</dbReference>
<dbReference type="FunFam" id="3.30.390.10:FF:000001">
    <property type="entry name" value="Enolase"/>
    <property type="match status" value="1"/>
</dbReference>
<dbReference type="Gene3D" id="3.20.20.120">
    <property type="entry name" value="Enolase-like C-terminal domain"/>
    <property type="match status" value="1"/>
</dbReference>
<dbReference type="Gene3D" id="3.30.390.10">
    <property type="entry name" value="Enolase-like, N-terminal domain"/>
    <property type="match status" value="1"/>
</dbReference>
<dbReference type="HAMAP" id="MF_00318">
    <property type="entry name" value="Enolase"/>
    <property type="match status" value="1"/>
</dbReference>
<dbReference type="InterPro" id="IPR000941">
    <property type="entry name" value="Enolase"/>
</dbReference>
<dbReference type="InterPro" id="IPR036849">
    <property type="entry name" value="Enolase-like_C_sf"/>
</dbReference>
<dbReference type="InterPro" id="IPR029017">
    <property type="entry name" value="Enolase-like_N"/>
</dbReference>
<dbReference type="InterPro" id="IPR020810">
    <property type="entry name" value="Enolase_C"/>
</dbReference>
<dbReference type="InterPro" id="IPR020809">
    <property type="entry name" value="Enolase_CS"/>
</dbReference>
<dbReference type="InterPro" id="IPR020811">
    <property type="entry name" value="Enolase_N"/>
</dbReference>
<dbReference type="NCBIfam" id="TIGR01060">
    <property type="entry name" value="eno"/>
    <property type="match status" value="1"/>
</dbReference>
<dbReference type="PANTHER" id="PTHR11902">
    <property type="entry name" value="ENOLASE"/>
    <property type="match status" value="1"/>
</dbReference>
<dbReference type="PANTHER" id="PTHR11902:SF1">
    <property type="entry name" value="ENOLASE"/>
    <property type="match status" value="1"/>
</dbReference>
<dbReference type="Pfam" id="PF00113">
    <property type="entry name" value="Enolase_C"/>
    <property type="match status" value="1"/>
</dbReference>
<dbReference type="Pfam" id="PF03952">
    <property type="entry name" value="Enolase_N"/>
    <property type="match status" value="1"/>
</dbReference>
<dbReference type="PIRSF" id="PIRSF001400">
    <property type="entry name" value="Enolase"/>
    <property type="match status" value="1"/>
</dbReference>
<dbReference type="PRINTS" id="PR00148">
    <property type="entry name" value="ENOLASE"/>
</dbReference>
<dbReference type="SFLD" id="SFLDF00002">
    <property type="entry name" value="enolase"/>
    <property type="match status" value="1"/>
</dbReference>
<dbReference type="SFLD" id="SFLDG00178">
    <property type="entry name" value="enolase"/>
    <property type="match status" value="1"/>
</dbReference>
<dbReference type="SMART" id="SM01192">
    <property type="entry name" value="Enolase_C"/>
    <property type="match status" value="1"/>
</dbReference>
<dbReference type="SMART" id="SM01193">
    <property type="entry name" value="Enolase_N"/>
    <property type="match status" value="1"/>
</dbReference>
<dbReference type="SUPFAM" id="SSF51604">
    <property type="entry name" value="Enolase C-terminal domain-like"/>
    <property type="match status" value="1"/>
</dbReference>
<dbReference type="SUPFAM" id="SSF54826">
    <property type="entry name" value="Enolase N-terminal domain-like"/>
    <property type="match status" value="1"/>
</dbReference>
<dbReference type="PROSITE" id="PS00164">
    <property type="entry name" value="ENOLASE"/>
    <property type="match status" value="1"/>
</dbReference>
<comment type="function">
    <text evidence="1">Catalyzes the reversible conversion of 2-phosphoglycerate (2-PG) into phosphoenolpyruvate (PEP). It is essential for the degradation of carbohydrates via glycolysis.</text>
</comment>
<comment type="catalytic activity">
    <reaction evidence="1">
        <text>(2R)-2-phosphoglycerate = phosphoenolpyruvate + H2O</text>
        <dbReference type="Rhea" id="RHEA:10164"/>
        <dbReference type="ChEBI" id="CHEBI:15377"/>
        <dbReference type="ChEBI" id="CHEBI:58289"/>
        <dbReference type="ChEBI" id="CHEBI:58702"/>
        <dbReference type="EC" id="4.2.1.11"/>
    </reaction>
</comment>
<comment type="cofactor">
    <cofactor evidence="1">
        <name>Mg(2+)</name>
        <dbReference type="ChEBI" id="CHEBI:18420"/>
    </cofactor>
    <text evidence="1">Binds a second Mg(2+) ion via substrate during catalysis.</text>
</comment>
<comment type="pathway">
    <text evidence="1">Carbohydrate degradation; glycolysis; pyruvate from D-glyceraldehyde 3-phosphate: step 4/5.</text>
</comment>
<comment type="subcellular location">
    <subcellularLocation>
        <location evidence="1">Cytoplasm</location>
    </subcellularLocation>
    <subcellularLocation>
        <location evidence="1">Secreted</location>
    </subcellularLocation>
    <subcellularLocation>
        <location evidence="1">Cell surface</location>
    </subcellularLocation>
    <text evidence="1">Fractions of enolase are present in both the cytoplasm and on the cell surface.</text>
</comment>
<comment type="similarity">
    <text evidence="1">Belongs to the enolase family.</text>
</comment>
<protein>
    <recommendedName>
        <fullName evidence="1">Enolase</fullName>
        <ecNumber evidence="1">4.2.1.11</ecNumber>
    </recommendedName>
    <alternativeName>
        <fullName evidence="1">2-phospho-D-glycerate hydro-lyase</fullName>
    </alternativeName>
    <alternativeName>
        <fullName evidence="1">2-phosphoglycerate dehydratase</fullName>
    </alternativeName>
</protein>
<feature type="chain" id="PRO_1000119571" description="Enolase">
    <location>
        <begin position="1"/>
        <end position="424"/>
    </location>
</feature>
<feature type="active site" description="Proton donor" evidence="1">
    <location>
        <position position="204"/>
    </location>
</feature>
<feature type="active site" description="Proton acceptor" evidence="1">
    <location>
        <position position="336"/>
    </location>
</feature>
<feature type="binding site" evidence="1">
    <location>
        <position position="163"/>
    </location>
    <ligand>
        <name>(2R)-2-phosphoglycerate</name>
        <dbReference type="ChEBI" id="CHEBI:58289"/>
    </ligand>
</feature>
<feature type="binding site" evidence="1">
    <location>
        <position position="241"/>
    </location>
    <ligand>
        <name>Mg(2+)</name>
        <dbReference type="ChEBI" id="CHEBI:18420"/>
    </ligand>
</feature>
<feature type="binding site" evidence="1">
    <location>
        <position position="284"/>
    </location>
    <ligand>
        <name>Mg(2+)</name>
        <dbReference type="ChEBI" id="CHEBI:18420"/>
    </ligand>
</feature>
<feature type="binding site" evidence="1">
    <location>
        <position position="311"/>
    </location>
    <ligand>
        <name>Mg(2+)</name>
        <dbReference type="ChEBI" id="CHEBI:18420"/>
    </ligand>
</feature>
<feature type="binding site" evidence="1">
    <location>
        <position position="336"/>
    </location>
    <ligand>
        <name>(2R)-2-phosphoglycerate</name>
        <dbReference type="ChEBI" id="CHEBI:58289"/>
    </ligand>
</feature>
<feature type="binding site" evidence="1">
    <location>
        <position position="365"/>
    </location>
    <ligand>
        <name>(2R)-2-phosphoglycerate</name>
        <dbReference type="ChEBI" id="CHEBI:58289"/>
    </ligand>
</feature>
<feature type="binding site" evidence="1">
    <location>
        <position position="366"/>
    </location>
    <ligand>
        <name>(2R)-2-phosphoglycerate</name>
        <dbReference type="ChEBI" id="CHEBI:58289"/>
    </ligand>
</feature>
<feature type="binding site" evidence="1">
    <location>
        <position position="387"/>
    </location>
    <ligand>
        <name>(2R)-2-phosphoglycerate</name>
        <dbReference type="ChEBI" id="CHEBI:58289"/>
    </ligand>
</feature>
<evidence type="ECO:0000255" key="1">
    <source>
        <dbReference type="HAMAP-Rule" id="MF_00318"/>
    </source>
</evidence>
<proteinExistence type="inferred from homology"/>
<gene>
    <name evidence="1" type="primary">eno</name>
    <name type="ordered locus">Dtur_1424</name>
</gene>
<reference key="1">
    <citation type="journal article" date="2016" name="Front. Microbiol.">
        <title>The complete genome sequence of hyperthermophile Dictyoglomus turgidum DSM 6724 reveals a specialized carbohydrate fermentor.</title>
        <authorList>
            <person name="Brumm P.J."/>
            <person name="Gowda K."/>
            <person name="Robb F.T."/>
            <person name="Mead D.A."/>
        </authorList>
    </citation>
    <scope>NUCLEOTIDE SEQUENCE [LARGE SCALE GENOMIC DNA]</scope>
    <source>
        <strain>DSM 6724 / Z-1310</strain>
    </source>
</reference>
<accession>B8E0W1</accession>